<keyword id="KW-0464">Manganese</keyword>
<keyword id="KW-0479">Metal-binding</keyword>
<keyword id="KW-0560">Oxidoreductase</keyword>
<dbReference type="EC" id="1.15.1.1"/>
<dbReference type="EMBL" id="X81389">
    <property type="protein sequence ID" value="CAA57152.1"/>
    <property type="molecule type" value="Genomic_DNA"/>
</dbReference>
<dbReference type="SMR" id="P50913"/>
<dbReference type="STRING" id="1783.BST44_27715"/>
<dbReference type="GO" id="GO:0046872">
    <property type="term" value="F:metal ion binding"/>
    <property type="evidence" value="ECO:0007669"/>
    <property type="project" value="UniProtKB-KW"/>
</dbReference>
<dbReference type="GO" id="GO:0004784">
    <property type="term" value="F:superoxide dismutase activity"/>
    <property type="evidence" value="ECO:0007669"/>
    <property type="project" value="UniProtKB-EC"/>
</dbReference>
<dbReference type="FunFam" id="1.10.287.990:FF:000001">
    <property type="entry name" value="Superoxide dismutase"/>
    <property type="match status" value="1"/>
</dbReference>
<dbReference type="FunFam" id="3.55.40.20:FF:000004">
    <property type="entry name" value="Superoxide dismutase [Fe]"/>
    <property type="match status" value="1"/>
</dbReference>
<dbReference type="Gene3D" id="1.10.287.990">
    <property type="entry name" value="Fe,Mn superoxide dismutase (SOD) domain"/>
    <property type="match status" value="1"/>
</dbReference>
<dbReference type="Gene3D" id="3.55.40.20">
    <property type="entry name" value="Iron/manganese superoxide dismutase, C-terminal domain"/>
    <property type="match status" value="1"/>
</dbReference>
<dbReference type="InterPro" id="IPR050265">
    <property type="entry name" value="Fe/Mn_Superoxide_Dismutase"/>
</dbReference>
<dbReference type="InterPro" id="IPR001189">
    <property type="entry name" value="Mn/Fe_SOD"/>
</dbReference>
<dbReference type="InterPro" id="IPR019833">
    <property type="entry name" value="Mn/Fe_SOD_BS"/>
</dbReference>
<dbReference type="InterPro" id="IPR019832">
    <property type="entry name" value="Mn/Fe_SOD_C"/>
</dbReference>
<dbReference type="InterPro" id="IPR019831">
    <property type="entry name" value="Mn/Fe_SOD_N"/>
</dbReference>
<dbReference type="InterPro" id="IPR036324">
    <property type="entry name" value="Mn/Fe_SOD_N_sf"/>
</dbReference>
<dbReference type="InterPro" id="IPR036314">
    <property type="entry name" value="SOD_C_sf"/>
</dbReference>
<dbReference type="PANTHER" id="PTHR11404">
    <property type="entry name" value="SUPEROXIDE DISMUTASE 2"/>
    <property type="match status" value="1"/>
</dbReference>
<dbReference type="PANTHER" id="PTHR11404:SF6">
    <property type="entry name" value="SUPEROXIDE DISMUTASE [MN], MITOCHONDRIAL"/>
    <property type="match status" value="1"/>
</dbReference>
<dbReference type="Pfam" id="PF02777">
    <property type="entry name" value="Sod_Fe_C"/>
    <property type="match status" value="1"/>
</dbReference>
<dbReference type="Pfam" id="PF00081">
    <property type="entry name" value="Sod_Fe_N"/>
    <property type="match status" value="1"/>
</dbReference>
<dbReference type="PIRSF" id="PIRSF000349">
    <property type="entry name" value="SODismutase"/>
    <property type="match status" value="1"/>
</dbReference>
<dbReference type="PRINTS" id="PR01703">
    <property type="entry name" value="MNSODISMTASE"/>
</dbReference>
<dbReference type="SUPFAM" id="SSF54719">
    <property type="entry name" value="Fe,Mn superoxide dismutase (SOD), C-terminal domain"/>
    <property type="match status" value="1"/>
</dbReference>
<dbReference type="SUPFAM" id="SSF46609">
    <property type="entry name" value="Fe,Mn superoxide dismutase (SOD), N-terminal domain"/>
    <property type="match status" value="1"/>
</dbReference>
<dbReference type="PROSITE" id="PS00088">
    <property type="entry name" value="SOD_MN"/>
    <property type="match status" value="1"/>
</dbReference>
<name>SODM_MYCSC</name>
<reference key="1">
    <citation type="journal article" date="1994" name="J. Clin. Microbiol.">
        <title>The superoxide dismutase gene, a target for detection and identification of mycobacteria by PCR.</title>
        <authorList>
            <person name="Zolg J.W."/>
            <person name="Philippi-Schulz S."/>
        </authorList>
    </citation>
    <scope>NUCLEOTIDE SEQUENCE [GENOMIC DNA]</scope>
    <source>
        <strain>ATCC 19981 / DSM 43992 / JCM 6381 / NCTC 10803 / TMC 1323</strain>
    </source>
</reference>
<proteinExistence type="inferred from homology"/>
<accession>P50913</accession>
<protein>
    <recommendedName>
        <fullName>Superoxide dismutase [Mn]</fullName>
        <ecNumber>1.15.1.1</ecNumber>
    </recommendedName>
</protein>
<gene>
    <name type="primary">sodA</name>
    <name type="synonym">sod</name>
</gene>
<feature type="chain" id="PRO_0000160058" description="Superoxide dismutase [Mn]">
    <location>
        <begin position="1" status="less than"/>
        <end position="163" status="greater than"/>
    </location>
</feature>
<feature type="binding site" evidence="1">
    <location>
        <position position="2"/>
    </location>
    <ligand>
        <name>Mn(2+)</name>
        <dbReference type="ChEBI" id="CHEBI:29035"/>
    </ligand>
</feature>
<feature type="binding site" evidence="1">
    <location>
        <position position="50"/>
    </location>
    <ligand>
        <name>Mn(2+)</name>
        <dbReference type="ChEBI" id="CHEBI:29035"/>
    </ligand>
</feature>
<feature type="binding site" evidence="1">
    <location>
        <position position="134"/>
    </location>
    <ligand>
        <name>Mn(2+)</name>
        <dbReference type="ChEBI" id="CHEBI:29035"/>
    </ligand>
</feature>
<feature type="binding site" evidence="1">
    <location>
        <position position="138"/>
    </location>
    <ligand>
        <name>Mn(2+)</name>
        <dbReference type="ChEBI" id="CHEBI:29035"/>
    </ligand>
</feature>
<feature type="non-terminal residue">
    <location>
        <position position="1"/>
    </location>
</feature>
<feature type="non-terminal residue">
    <location>
        <position position="163"/>
    </location>
</feature>
<organism>
    <name type="scientific">Mycobacterium scrofulaceum</name>
    <dbReference type="NCBI Taxonomy" id="1783"/>
    <lineage>
        <taxon>Bacteria</taxon>
        <taxon>Bacillati</taxon>
        <taxon>Actinomycetota</taxon>
        <taxon>Actinomycetes</taxon>
        <taxon>Mycobacteriales</taxon>
        <taxon>Mycobacteriaceae</taxon>
        <taxon>Mycobacterium</taxon>
    </lineage>
</organism>
<sequence length="163" mass="18149">LHHSKHHATYVKGVNDAVAKLQEARANDDHAAIFLNEKNLAFHLGGHVNHSIWWKNLSPDGGDKPTGELAAAIDDAFGSFDKFRAQFSAAANGLQGSGWAVLGYDTLGSRLLTFQLYDQQANVPLGIIPLLQVDMWEHAFYLQYKNVKADYVKAFWNVVNWAE</sequence>
<evidence type="ECO:0000250" key="1"/>
<evidence type="ECO:0000305" key="2"/>
<comment type="function">
    <text>Destroys superoxide anion radicals which are normally produced within the cells and which are toxic to biological systems.</text>
</comment>
<comment type="catalytic activity">
    <reaction>
        <text>2 superoxide + 2 H(+) = H2O2 + O2</text>
        <dbReference type="Rhea" id="RHEA:20696"/>
        <dbReference type="ChEBI" id="CHEBI:15378"/>
        <dbReference type="ChEBI" id="CHEBI:15379"/>
        <dbReference type="ChEBI" id="CHEBI:16240"/>
        <dbReference type="ChEBI" id="CHEBI:18421"/>
        <dbReference type="EC" id="1.15.1.1"/>
    </reaction>
</comment>
<comment type="cofactor">
    <cofactor evidence="1">
        <name>Mn(2+)</name>
        <dbReference type="ChEBI" id="CHEBI:29035"/>
    </cofactor>
    <text evidence="1">Binds 1 Mn(2+) ion per subunit.</text>
</comment>
<comment type="similarity">
    <text evidence="2">Belongs to the iron/manganese superoxide dismutase family.</text>
</comment>